<sequence>MGQKIHPLGFRLGTTQNHCSYWFAQSKKIYSKLVKEDKEIRNCIEKYVQKHTNNPFHYGGIARIEIYRKTDLIRVEIHMGFTDLLTENGGIRFEQLKSNIEKIVNSKNQKLCLILIKIDKPYTEPKVLAEYIALQLENRVVFRKAVKKALELAGNFKNKGGIKIQIAGRLNGIEIARVEWTREGRVPLQTIRAHINYYYYPAKTIYGILGIKVWIYQNDE</sequence>
<organism>
    <name type="scientific">Psilotum nudum</name>
    <name type="common">Whisk fern</name>
    <name type="synonym">Lycopodium nudum</name>
    <dbReference type="NCBI Taxonomy" id="3240"/>
    <lineage>
        <taxon>Eukaryota</taxon>
        <taxon>Viridiplantae</taxon>
        <taxon>Streptophyta</taxon>
        <taxon>Embryophyta</taxon>
        <taxon>Tracheophyta</taxon>
        <taxon>Polypodiopsida</taxon>
        <taxon>Ophioglossidae</taxon>
        <taxon>Psilotales</taxon>
        <taxon>Psilotaceae</taxon>
        <taxon>Psilotum</taxon>
    </lineage>
</organism>
<feature type="chain" id="PRO_0000130303" description="Small ribosomal subunit protein uS3c">
    <location>
        <begin position="1"/>
        <end position="220"/>
    </location>
</feature>
<feature type="domain" description="KH type-2">
    <location>
        <begin position="48"/>
        <end position="119"/>
    </location>
</feature>
<gene>
    <name type="primary">rps3</name>
</gene>
<geneLocation type="chloroplast"/>
<reference key="1">
    <citation type="journal article" date="2004" name="Mol. Biol. Evol.">
        <title>Chloroplast phylogeny indicates that bryophytes are monophyletic.</title>
        <authorList>
            <person name="Nishiyama T."/>
            <person name="Wolf P.G."/>
            <person name="Kugita M."/>
            <person name="Sinclair R.B."/>
            <person name="Sugita M."/>
            <person name="Sugiura C."/>
            <person name="Wakasugi T."/>
            <person name="Yamada K."/>
            <person name="Yoshinaga K."/>
            <person name="Yamaguchi K."/>
            <person name="Ueda K."/>
            <person name="Hasebe M."/>
        </authorList>
    </citation>
    <scope>NUCLEOTIDE SEQUENCE [LARGE SCALE GENOMIC DNA]</scope>
    <source>
        <strain>Kingyoku</strain>
    </source>
</reference>
<dbReference type="EMBL" id="AP004638">
    <property type="protein sequence ID" value="BAB84255.1"/>
    <property type="molecule type" value="Genomic_DNA"/>
</dbReference>
<dbReference type="RefSeq" id="NP_569667.1">
    <property type="nucleotide sequence ID" value="NC_003386.1"/>
</dbReference>
<dbReference type="SMR" id="Q8WHY4"/>
<dbReference type="GeneID" id="2545176"/>
<dbReference type="GO" id="GO:0009507">
    <property type="term" value="C:chloroplast"/>
    <property type="evidence" value="ECO:0007669"/>
    <property type="project" value="UniProtKB-SubCell"/>
</dbReference>
<dbReference type="GO" id="GO:0022627">
    <property type="term" value="C:cytosolic small ribosomal subunit"/>
    <property type="evidence" value="ECO:0007669"/>
    <property type="project" value="TreeGrafter"/>
</dbReference>
<dbReference type="GO" id="GO:0019843">
    <property type="term" value="F:rRNA binding"/>
    <property type="evidence" value="ECO:0007669"/>
    <property type="project" value="UniProtKB-KW"/>
</dbReference>
<dbReference type="GO" id="GO:0003735">
    <property type="term" value="F:structural constituent of ribosome"/>
    <property type="evidence" value="ECO:0007669"/>
    <property type="project" value="InterPro"/>
</dbReference>
<dbReference type="GO" id="GO:0006412">
    <property type="term" value="P:translation"/>
    <property type="evidence" value="ECO:0007669"/>
    <property type="project" value="UniProtKB-UniRule"/>
</dbReference>
<dbReference type="CDD" id="cd02412">
    <property type="entry name" value="KH-II_30S_S3"/>
    <property type="match status" value="1"/>
</dbReference>
<dbReference type="Gene3D" id="3.30.300.20">
    <property type="match status" value="1"/>
</dbReference>
<dbReference type="Gene3D" id="3.30.1140.32">
    <property type="entry name" value="Ribosomal protein S3, C-terminal domain"/>
    <property type="match status" value="1"/>
</dbReference>
<dbReference type="HAMAP" id="MF_01309_B">
    <property type="entry name" value="Ribosomal_uS3_B"/>
    <property type="match status" value="1"/>
</dbReference>
<dbReference type="InterPro" id="IPR015946">
    <property type="entry name" value="KH_dom-like_a/b"/>
</dbReference>
<dbReference type="InterPro" id="IPR009019">
    <property type="entry name" value="KH_sf_prok-type"/>
</dbReference>
<dbReference type="InterPro" id="IPR036419">
    <property type="entry name" value="Ribosomal_S3_C_sf"/>
</dbReference>
<dbReference type="InterPro" id="IPR005704">
    <property type="entry name" value="Ribosomal_uS3_bac-typ"/>
</dbReference>
<dbReference type="InterPro" id="IPR001351">
    <property type="entry name" value="Ribosomal_uS3_C"/>
</dbReference>
<dbReference type="InterPro" id="IPR018280">
    <property type="entry name" value="Ribosomal_uS3_CS"/>
</dbReference>
<dbReference type="NCBIfam" id="TIGR01009">
    <property type="entry name" value="rpsC_bact"/>
    <property type="match status" value="1"/>
</dbReference>
<dbReference type="PANTHER" id="PTHR11760">
    <property type="entry name" value="30S/40S RIBOSOMAL PROTEIN S3"/>
    <property type="match status" value="1"/>
</dbReference>
<dbReference type="PANTHER" id="PTHR11760:SF19">
    <property type="entry name" value="SMALL RIBOSOMAL SUBUNIT PROTEIN US3C"/>
    <property type="match status" value="1"/>
</dbReference>
<dbReference type="Pfam" id="PF00189">
    <property type="entry name" value="Ribosomal_S3_C"/>
    <property type="match status" value="1"/>
</dbReference>
<dbReference type="SUPFAM" id="SSF54814">
    <property type="entry name" value="Prokaryotic type KH domain (KH-domain type II)"/>
    <property type="match status" value="1"/>
</dbReference>
<dbReference type="SUPFAM" id="SSF54821">
    <property type="entry name" value="Ribosomal protein S3 C-terminal domain"/>
    <property type="match status" value="1"/>
</dbReference>
<dbReference type="PROSITE" id="PS00548">
    <property type="entry name" value="RIBOSOMAL_S3"/>
    <property type="match status" value="1"/>
</dbReference>
<name>RR3_PSINU</name>
<evidence type="ECO:0000250" key="1"/>
<evidence type="ECO:0000305" key="2"/>
<proteinExistence type="inferred from homology"/>
<keyword id="KW-0150">Chloroplast</keyword>
<keyword id="KW-0934">Plastid</keyword>
<keyword id="KW-0687">Ribonucleoprotein</keyword>
<keyword id="KW-0689">Ribosomal protein</keyword>
<keyword id="KW-0694">RNA-binding</keyword>
<keyword id="KW-0699">rRNA-binding</keyword>
<comment type="subunit">
    <text evidence="1">Part of the 30S ribosomal subunit.</text>
</comment>
<comment type="subcellular location">
    <subcellularLocation>
        <location>Plastid</location>
        <location>Chloroplast</location>
    </subcellularLocation>
</comment>
<comment type="similarity">
    <text evidence="2">Belongs to the universal ribosomal protein uS3 family.</text>
</comment>
<protein>
    <recommendedName>
        <fullName evidence="2">Small ribosomal subunit protein uS3c</fullName>
    </recommendedName>
    <alternativeName>
        <fullName>30S ribosomal protein S3, chloroplastic</fullName>
    </alternativeName>
</protein>
<accession>Q8WHY4</accession>